<gene>
    <name evidence="1" type="primary">rplQ</name>
    <name type="ordered locus">Rsph17025_2509</name>
</gene>
<organism>
    <name type="scientific">Cereibacter sphaeroides (strain ATCC 17025 / ATH 2.4.3)</name>
    <name type="common">Rhodobacter sphaeroides</name>
    <dbReference type="NCBI Taxonomy" id="349102"/>
    <lineage>
        <taxon>Bacteria</taxon>
        <taxon>Pseudomonadati</taxon>
        <taxon>Pseudomonadota</taxon>
        <taxon>Alphaproteobacteria</taxon>
        <taxon>Rhodobacterales</taxon>
        <taxon>Paracoccaceae</taxon>
        <taxon>Cereibacter</taxon>
    </lineage>
</organism>
<accession>A4WVI3</accession>
<evidence type="ECO:0000255" key="1">
    <source>
        <dbReference type="HAMAP-Rule" id="MF_01368"/>
    </source>
</evidence>
<evidence type="ECO:0000305" key="2"/>
<name>RL17_CERS5</name>
<proteinExistence type="inferred from homology"/>
<keyword id="KW-0687">Ribonucleoprotein</keyword>
<keyword id="KW-0689">Ribosomal protein</keyword>
<protein>
    <recommendedName>
        <fullName evidence="1">Large ribosomal subunit protein bL17</fullName>
    </recommendedName>
    <alternativeName>
        <fullName evidence="2">50S ribosomal protein L17</fullName>
    </alternativeName>
</protein>
<comment type="subunit">
    <text evidence="1">Part of the 50S ribosomal subunit. Contacts protein L32.</text>
</comment>
<comment type="similarity">
    <text evidence="1">Belongs to the bacterial ribosomal protein bL17 family.</text>
</comment>
<dbReference type="EMBL" id="CP000661">
    <property type="protein sequence ID" value="ABP71397.1"/>
    <property type="molecule type" value="Genomic_DNA"/>
</dbReference>
<dbReference type="SMR" id="A4WVI3"/>
<dbReference type="STRING" id="349102.Rsph17025_2509"/>
<dbReference type="KEGG" id="rsq:Rsph17025_2509"/>
<dbReference type="eggNOG" id="COG0203">
    <property type="taxonomic scope" value="Bacteria"/>
</dbReference>
<dbReference type="HOGENOM" id="CLU_074407_2_0_5"/>
<dbReference type="BioCyc" id="RSPH349102:G1G8M-2587-MONOMER"/>
<dbReference type="GO" id="GO:0022625">
    <property type="term" value="C:cytosolic large ribosomal subunit"/>
    <property type="evidence" value="ECO:0007669"/>
    <property type="project" value="TreeGrafter"/>
</dbReference>
<dbReference type="GO" id="GO:0003735">
    <property type="term" value="F:structural constituent of ribosome"/>
    <property type="evidence" value="ECO:0007669"/>
    <property type="project" value="InterPro"/>
</dbReference>
<dbReference type="GO" id="GO:0006412">
    <property type="term" value="P:translation"/>
    <property type="evidence" value="ECO:0007669"/>
    <property type="project" value="UniProtKB-UniRule"/>
</dbReference>
<dbReference type="FunFam" id="3.90.1030.10:FF:000001">
    <property type="entry name" value="50S ribosomal protein L17"/>
    <property type="match status" value="1"/>
</dbReference>
<dbReference type="Gene3D" id="3.90.1030.10">
    <property type="entry name" value="Ribosomal protein L17"/>
    <property type="match status" value="1"/>
</dbReference>
<dbReference type="HAMAP" id="MF_01368">
    <property type="entry name" value="Ribosomal_bL17"/>
    <property type="match status" value="1"/>
</dbReference>
<dbReference type="InterPro" id="IPR000456">
    <property type="entry name" value="Ribosomal_bL17"/>
</dbReference>
<dbReference type="InterPro" id="IPR047859">
    <property type="entry name" value="Ribosomal_bL17_CS"/>
</dbReference>
<dbReference type="InterPro" id="IPR036373">
    <property type="entry name" value="Ribosomal_bL17_sf"/>
</dbReference>
<dbReference type="NCBIfam" id="TIGR00059">
    <property type="entry name" value="L17"/>
    <property type="match status" value="1"/>
</dbReference>
<dbReference type="PANTHER" id="PTHR14413:SF16">
    <property type="entry name" value="LARGE RIBOSOMAL SUBUNIT PROTEIN BL17M"/>
    <property type="match status" value="1"/>
</dbReference>
<dbReference type="PANTHER" id="PTHR14413">
    <property type="entry name" value="RIBOSOMAL PROTEIN L17"/>
    <property type="match status" value="1"/>
</dbReference>
<dbReference type="Pfam" id="PF01196">
    <property type="entry name" value="Ribosomal_L17"/>
    <property type="match status" value="1"/>
</dbReference>
<dbReference type="SUPFAM" id="SSF64263">
    <property type="entry name" value="Prokaryotic ribosomal protein L17"/>
    <property type="match status" value="1"/>
</dbReference>
<dbReference type="PROSITE" id="PS01167">
    <property type="entry name" value="RIBOSOMAL_L17"/>
    <property type="match status" value="1"/>
</dbReference>
<reference key="1">
    <citation type="submission" date="2007-04" db="EMBL/GenBank/DDBJ databases">
        <title>Complete sequence of chromosome of Rhodobacter sphaeroides ATCC 17025.</title>
        <authorList>
            <consortium name="US DOE Joint Genome Institute"/>
            <person name="Copeland A."/>
            <person name="Lucas S."/>
            <person name="Lapidus A."/>
            <person name="Barry K."/>
            <person name="Detter J.C."/>
            <person name="Glavina del Rio T."/>
            <person name="Hammon N."/>
            <person name="Israni S."/>
            <person name="Dalin E."/>
            <person name="Tice H."/>
            <person name="Pitluck S."/>
            <person name="Chertkov O."/>
            <person name="Brettin T."/>
            <person name="Bruce D."/>
            <person name="Han C."/>
            <person name="Schmutz J."/>
            <person name="Larimer F."/>
            <person name="Land M."/>
            <person name="Hauser L."/>
            <person name="Kyrpides N."/>
            <person name="Kim E."/>
            <person name="Richardson P."/>
            <person name="Mackenzie C."/>
            <person name="Choudhary M."/>
            <person name="Donohue T.J."/>
            <person name="Kaplan S."/>
        </authorList>
    </citation>
    <scope>NUCLEOTIDE SEQUENCE [LARGE SCALE GENOMIC DNA]</scope>
    <source>
        <strain>ATCC 17025 / ATH 2.4.3</strain>
    </source>
</reference>
<sequence>MRHARGYRRLNRTHEHRKALFANMAGSLIEHEQIKTTLPKAKELRPIIEKLVTLAKRGDLHARRQAAAQLKEDRHVERLFAILGPRYAERAGGYVRVLKAGFRYGDMAPMAIIEFVDRDPNAKGAADKARVLAEEALED</sequence>
<feature type="chain" id="PRO_1000055928" description="Large ribosomal subunit protein bL17">
    <location>
        <begin position="1"/>
        <end position="139"/>
    </location>
</feature>